<organism>
    <name type="scientific">Gallus gallus</name>
    <name type="common">Chicken</name>
    <dbReference type="NCBI Taxonomy" id="9031"/>
    <lineage>
        <taxon>Eukaryota</taxon>
        <taxon>Metazoa</taxon>
        <taxon>Chordata</taxon>
        <taxon>Craniata</taxon>
        <taxon>Vertebrata</taxon>
        <taxon>Euteleostomi</taxon>
        <taxon>Archelosauria</taxon>
        <taxon>Archosauria</taxon>
        <taxon>Dinosauria</taxon>
        <taxon>Saurischia</taxon>
        <taxon>Theropoda</taxon>
        <taxon>Coelurosauria</taxon>
        <taxon>Aves</taxon>
        <taxon>Neognathae</taxon>
        <taxon>Galloanserae</taxon>
        <taxon>Galliformes</taxon>
        <taxon>Phasianidae</taxon>
        <taxon>Phasianinae</taxon>
        <taxon>Gallus</taxon>
    </lineage>
</organism>
<name>PAAF1_CHICK</name>
<proteinExistence type="evidence at transcript level"/>
<reference key="1">
    <citation type="journal article" date="2005" name="Genome Biol.">
        <title>Full-length cDNAs from chicken bursal lymphocytes to facilitate gene function analysis.</title>
        <authorList>
            <person name="Caldwell R.B."/>
            <person name="Kierzek A.M."/>
            <person name="Arakawa H."/>
            <person name="Bezzubov Y."/>
            <person name="Zaim J."/>
            <person name="Fiedler P."/>
            <person name="Kutter S."/>
            <person name="Blagodatski A."/>
            <person name="Kostovska D."/>
            <person name="Koter M."/>
            <person name="Plachy J."/>
            <person name="Carninci P."/>
            <person name="Hayashizaki Y."/>
            <person name="Buerstedde J.-M."/>
        </authorList>
    </citation>
    <scope>NUCLEOTIDE SEQUENCE [LARGE SCALE MRNA]</scope>
    <source>
        <strain>CB</strain>
        <tissue>Bursa of Fabricius</tissue>
    </source>
</reference>
<accession>Q5ZK69</accession>
<feature type="chain" id="PRO_0000235686" description="Proteasomal ATPase-associated factor 1">
    <location>
        <begin position="1"/>
        <end position="392"/>
    </location>
</feature>
<feature type="repeat" description="WD 1">
    <location>
        <begin position="90"/>
        <end position="129"/>
    </location>
</feature>
<feature type="repeat" description="WD 2">
    <location>
        <begin position="132"/>
        <end position="171"/>
    </location>
</feature>
<feature type="repeat" description="WD 3">
    <location>
        <begin position="174"/>
        <end position="213"/>
    </location>
</feature>
<feature type="repeat" description="WD 4">
    <location>
        <begin position="278"/>
        <end position="316"/>
    </location>
</feature>
<feature type="repeat" description="WD 5">
    <location>
        <begin position="359"/>
        <end position="392"/>
    </location>
</feature>
<sequence length="392" mass="42373">MAATLRIQSDWSQALRRDEGEAWLSCRSPGKPTLYGSLTRRGLSTEGVPDIAASEGFVVGEVTKKSILISCPHENVSTKFLAPYTTFSRIHQKSITCLDISSGGGLGVSTSTDGTMKIWQAANGEIRRLLEGHVYDVNCCRFFPSGLVVLSGGMDAQLKIWSAEDASCVVTFKGHKGGILDTAIVDRGRNVLSCSRDGTARLWDCGKSSCLAVIADCGSPINGIAVGTADDSVNLGTPEKAPSEREIGTEGKILLLAREDKKLQGVGLQSRQPVFLFDGSDAFNCCTFLSSTYFLAGTQDGNIYQLDVRNTNAPIQIIHRSGAPVLSLLPYRDGFIASQGDGTCFIVQQDLDYVIDLTEADCDPVYKVAPWEKQIYTCCRDGVVRRYQLGDL</sequence>
<evidence type="ECO:0000250" key="1"/>
<evidence type="ECO:0000305" key="2"/>
<comment type="function">
    <text evidence="1">Inhibits proteasome 26S assembly and activity by impairing the association of the 19S regulatory complex with the 20S core.</text>
</comment>
<comment type="subunit">
    <text evidence="1">Interacts with proteasome 26S subunit ATPases.</text>
</comment>
<comment type="similarity">
    <text evidence="2">Belongs to the WD repeat PAAF1/RPN14 family.</text>
</comment>
<dbReference type="EMBL" id="AJ720215">
    <property type="protein sequence ID" value="CAG31874.1"/>
    <property type="molecule type" value="mRNA"/>
</dbReference>
<dbReference type="RefSeq" id="NP_001026006.1">
    <property type="nucleotide sequence ID" value="NM_001030835.1"/>
</dbReference>
<dbReference type="SMR" id="Q5ZK69"/>
<dbReference type="FunCoup" id="Q5ZK69">
    <property type="interactions" value="319"/>
</dbReference>
<dbReference type="STRING" id="9031.ENSGALP00000027934"/>
<dbReference type="PaxDb" id="9031-ENSGALP00000027934"/>
<dbReference type="GeneID" id="419061"/>
<dbReference type="KEGG" id="gga:419061"/>
<dbReference type="CTD" id="80227"/>
<dbReference type="VEuPathDB" id="HostDB:geneid_419061"/>
<dbReference type="eggNOG" id="KOG0266">
    <property type="taxonomic scope" value="Eukaryota"/>
</dbReference>
<dbReference type="InParanoid" id="Q5ZK69"/>
<dbReference type="OrthoDB" id="27537at2759"/>
<dbReference type="PhylomeDB" id="Q5ZK69"/>
<dbReference type="PRO" id="PR:Q5ZK69"/>
<dbReference type="Proteomes" id="UP000000539">
    <property type="component" value="Unassembled WGS sequence"/>
</dbReference>
<dbReference type="GO" id="GO:0000502">
    <property type="term" value="C:proteasome complex"/>
    <property type="evidence" value="ECO:0007669"/>
    <property type="project" value="UniProtKB-KW"/>
</dbReference>
<dbReference type="FunFam" id="2.130.10.10:FF:000181">
    <property type="entry name" value="Proteasomal ATPase associated factor 1"/>
    <property type="match status" value="1"/>
</dbReference>
<dbReference type="FunFam" id="2.130.10.10:FF:000212">
    <property type="entry name" value="Proteasomal ATPase associated factor 1"/>
    <property type="match status" value="1"/>
</dbReference>
<dbReference type="Gene3D" id="2.130.10.10">
    <property type="entry name" value="YVTN repeat-like/Quinoprotein amine dehydrogenase"/>
    <property type="match status" value="2"/>
</dbReference>
<dbReference type="InterPro" id="IPR015943">
    <property type="entry name" value="WD40/YVTN_repeat-like_dom_sf"/>
</dbReference>
<dbReference type="InterPro" id="IPR036322">
    <property type="entry name" value="WD40_repeat_dom_sf"/>
</dbReference>
<dbReference type="InterPro" id="IPR001680">
    <property type="entry name" value="WD40_rpt"/>
</dbReference>
<dbReference type="InterPro" id="IPR051179">
    <property type="entry name" value="WD_repeat_multifunction"/>
</dbReference>
<dbReference type="PANTHER" id="PTHR19857:SF19">
    <property type="entry name" value="26S PROTEASOME REGULATORY SUBUNIT RPN14"/>
    <property type="match status" value="1"/>
</dbReference>
<dbReference type="PANTHER" id="PTHR19857">
    <property type="entry name" value="MITOCHONDRIAL DIVISION PROTEIN 1-RELATED"/>
    <property type="match status" value="1"/>
</dbReference>
<dbReference type="Pfam" id="PF00400">
    <property type="entry name" value="WD40"/>
    <property type="match status" value="3"/>
</dbReference>
<dbReference type="SMART" id="SM00320">
    <property type="entry name" value="WD40"/>
    <property type="match status" value="6"/>
</dbReference>
<dbReference type="SUPFAM" id="SSF50978">
    <property type="entry name" value="WD40 repeat-like"/>
    <property type="match status" value="1"/>
</dbReference>
<dbReference type="PROSITE" id="PS00678">
    <property type="entry name" value="WD_REPEATS_1"/>
    <property type="match status" value="1"/>
</dbReference>
<dbReference type="PROSITE" id="PS50082">
    <property type="entry name" value="WD_REPEATS_2"/>
    <property type="match status" value="3"/>
</dbReference>
<dbReference type="PROSITE" id="PS50294">
    <property type="entry name" value="WD_REPEATS_REGION"/>
    <property type="match status" value="1"/>
</dbReference>
<protein>
    <recommendedName>
        <fullName>Proteasomal ATPase-associated factor 1</fullName>
    </recommendedName>
    <alternativeName>
        <fullName>WD repeat-containing protein 71</fullName>
    </alternativeName>
</protein>
<keyword id="KW-0647">Proteasome</keyword>
<keyword id="KW-1185">Reference proteome</keyword>
<keyword id="KW-0677">Repeat</keyword>
<keyword id="KW-0853">WD repeat</keyword>
<gene>
    <name type="primary">PAAF1</name>
    <name type="synonym">WDR71</name>
    <name type="ORF">RCJMB04_12m19</name>
</gene>